<sequence>MSQAAETLDGWYSLHLFYAVDWASLRIVPKDERDALVTEFQSFLENTATVRSSKSGDQAIYNITGQKADLLLWFLRPEMKSLNHIENEFNKLRIADFLIPTYSYVSVIELSNYLAGKSDEDPYENPHIKARLYPELPHSDYICFYPMNKRRNETYNWYMLTMEERQKLMYDHGMIGRKYAGKIKQFITGSVGFDDFEWGVTLFSDDVLQFKKIVYEMRFDETTARYGEFGSFFVGHLINTNEFDQFFAIS</sequence>
<comment type="function">
    <text evidence="1">Involved in coproporphyrin-dependent heme b biosynthesis. Catalyzes the decarboxylation of Fe-coproporphyrin III (coproheme) to heme b (protoheme IX), the last step of the pathway. The reaction occurs in a stepwise manner with a three-propionate intermediate.</text>
</comment>
<comment type="catalytic activity">
    <reaction evidence="1">
        <text>Fe-coproporphyrin III + 2 H2O2 + 2 H(+) = heme b + 2 CO2 + 4 H2O</text>
        <dbReference type="Rhea" id="RHEA:56516"/>
        <dbReference type="ChEBI" id="CHEBI:15377"/>
        <dbReference type="ChEBI" id="CHEBI:15378"/>
        <dbReference type="ChEBI" id="CHEBI:16240"/>
        <dbReference type="ChEBI" id="CHEBI:16526"/>
        <dbReference type="ChEBI" id="CHEBI:60344"/>
        <dbReference type="ChEBI" id="CHEBI:68438"/>
        <dbReference type="EC" id="1.3.98.5"/>
    </reaction>
    <physiologicalReaction direction="left-to-right" evidence="1">
        <dbReference type="Rhea" id="RHEA:56517"/>
    </physiologicalReaction>
</comment>
<comment type="catalytic activity">
    <reaction evidence="1">
        <text>Fe-coproporphyrin III + H2O2 + H(+) = harderoheme III + CO2 + 2 H2O</text>
        <dbReference type="Rhea" id="RHEA:57940"/>
        <dbReference type="ChEBI" id="CHEBI:15377"/>
        <dbReference type="ChEBI" id="CHEBI:15378"/>
        <dbReference type="ChEBI" id="CHEBI:16240"/>
        <dbReference type="ChEBI" id="CHEBI:16526"/>
        <dbReference type="ChEBI" id="CHEBI:68438"/>
        <dbReference type="ChEBI" id="CHEBI:142463"/>
    </reaction>
    <physiologicalReaction direction="left-to-right" evidence="1">
        <dbReference type="Rhea" id="RHEA:57941"/>
    </physiologicalReaction>
</comment>
<comment type="catalytic activity">
    <reaction evidence="1">
        <text>harderoheme III + H2O2 + H(+) = heme b + CO2 + 2 H2O</text>
        <dbReference type="Rhea" id="RHEA:57944"/>
        <dbReference type="ChEBI" id="CHEBI:15377"/>
        <dbReference type="ChEBI" id="CHEBI:15378"/>
        <dbReference type="ChEBI" id="CHEBI:16240"/>
        <dbReference type="ChEBI" id="CHEBI:16526"/>
        <dbReference type="ChEBI" id="CHEBI:60344"/>
        <dbReference type="ChEBI" id="CHEBI:142463"/>
    </reaction>
    <physiologicalReaction direction="left-to-right" evidence="1">
        <dbReference type="Rhea" id="RHEA:57945"/>
    </physiologicalReaction>
</comment>
<comment type="cofactor">
    <cofactor evidence="1">
        <name>Fe-coproporphyrin III</name>
        <dbReference type="ChEBI" id="CHEBI:68438"/>
    </cofactor>
    <text evidence="1">Fe-coproporphyrin III acts both as a substrate and a redox cofactor.</text>
</comment>
<comment type="pathway">
    <text evidence="1">Porphyrin-containing compound metabolism; protoheme biosynthesis.</text>
</comment>
<comment type="similarity">
    <text evidence="1">Belongs to the ChdC family. Type 1 subfamily.</text>
</comment>
<proteinExistence type="inferred from homology"/>
<gene>
    <name evidence="1" type="primary">chdC</name>
    <name type="ordered locus">SaurJH9_0610</name>
</gene>
<keyword id="KW-0349">Heme</keyword>
<keyword id="KW-0350">Heme biosynthesis</keyword>
<keyword id="KW-0408">Iron</keyword>
<keyword id="KW-0479">Metal-binding</keyword>
<keyword id="KW-0560">Oxidoreductase</keyword>
<dbReference type="EC" id="1.3.98.5" evidence="1"/>
<dbReference type="EMBL" id="CP000703">
    <property type="protein sequence ID" value="ABQ48414.1"/>
    <property type="molecule type" value="Genomic_DNA"/>
</dbReference>
<dbReference type="SMR" id="A5IQE1"/>
<dbReference type="KEGG" id="saj:SaurJH9_0610"/>
<dbReference type="HOGENOM" id="CLU_063226_1_0_9"/>
<dbReference type="UniPathway" id="UPA00252"/>
<dbReference type="GO" id="GO:0020037">
    <property type="term" value="F:heme binding"/>
    <property type="evidence" value="ECO:0007669"/>
    <property type="project" value="InterPro"/>
</dbReference>
<dbReference type="GO" id="GO:0046872">
    <property type="term" value="F:metal ion binding"/>
    <property type="evidence" value="ECO:0007669"/>
    <property type="project" value="UniProtKB-KW"/>
</dbReference>
<dbReference type="GO" id="GO:0016634">
    <property type="term" value="F:oxidoreductase activity, acting on the CH-CH group of donors, oxygen as acceptor"/>
    <property type="evidence" value="ECO:0007669"/>
    <property type="project" value="UniProtKB-UniRule"/>
</dbReference>
<dbReference type="GO" id="GO:0004601">
    <property type="term" value="F:peroxidase activity"/>
    <property type="evidence" value="ECO:0007669"/>
    <property type="project" value="InterPro"/>
</dbReference>
<dbReference type="GO" id="GO:0006785">
    <property type="term" value="P:heme B biosynthetic process"/>
    <property type="evidence" value="ECO:0007669"/>
    <property type="project" value="UniProtKB-UniRule"/>
</dbReference>
<dbReference type="Gene3D" id="3.30.70.1030">
    <property type="entry name" value="Apc35880, domain 1"/>
    <property type="match status" value="2"/>
</dbReference>
<dbReference type="HAMAP" id="MF_01442">
    <property type="entry name" value="Coproheme_decarbox_1"/>
    <property type="match status" value="1"/>
</dbReference>
<dbReference type="InterPro" id="IPR031332">
    <property type="entry name" value="CHDC"/>
</dbReference>
<dbReference type="InterPro" id="IPR010644">
    <property type="entry name" value="ChdC/CLD"/>
</dbReference>
<dbReference type="InterPro" id="IPR011008">
    <property type="entry name" value="Dimeric_a/b-barrel"/>
</dbReference>
<dbReference type="NCBIfam" id="NF008913">
    <property type="entry name" value="PRK12276.1"/>
    <property type="match status" value="1"/>
</dbReference>
<dbReference type="PANTHER" id="PTHR36843:SF1">
    <property type="entry name" value="COPROHEME DECARBOXYLASE"/>
    <property type="match status" value="1"/>
</dbReference>
<dbReference type="PANTHER" id="PTHR36843">
    <property type="entry name" value="HEME-DEPENDENT PEROXIDASE YWFI-RELATED"/>
    <property type="match status" value="1"/>
</dbReference>
<dbReference type="Pfam" id="PF06778">
    <property type="entry name" value="Chlor_dismutase"/>
    <property type="match status" value="1"/>
</dbReference>
<dbReference type="SUPFAM" id="SSF54909">
    <property type="entry name" value="Dimeric alpha+beta barrel"/>
    <property type="match status" value="1"/>
</dbReference>
<feature type="chain" id="PRO_1000087458" description="Coproheme decarboxylase">
    <location>
        <begin position="1"/>
        <end position="250"/>
    </location>
</feature>
<feature type="active site" evidence="1">
    <location>
        <position position="145"/>
    </location>
</feature>
<feature type="binding site" evidence="1">
    <location>
        <position position="131"/>
    </location>
    <ligand>
        <name>Fe-coproporphyrin III</name>
        <dbReference type="ChEBI" id="CHEBI:68438"/>
    </ligand>
</feature>
<feature type="binding site" evidence="1">
    <location>
        <begin position="145"/>
        <end position="149"/>
    </location>
    <ligand>
        <name>Fe-coproporphyrin III</name>
        <dbReference type="ChEBI" id="CHEBI:68438"/>
    </ligand>
</feature>
<feature type="binding site" description="axial binding residue" evidence="1">
    <location>
        <position position="172"/>
    </location>
    <ligand>
        <name>Fe-coproporphyrin III</name>
        <dbReference type="ChEBI" id="CHEBI:68438"/>
    </ligand>
    <ligandPart>
        <name>Fe</name>
        <dbReference type="ChEBI" id="CHEBI:18248"/>
    </ligandPart>
</feature>
<feature type="binding site" evidence="1">
    <location>
        <position position="185"/>
    </location>
    <ligand>
        <name>Fe-coproporphyrin III</name>
        <dbReference type="ChEBI" id="CHEBI:68438"/>
    </ligand>
</feature>
<accession>A5IQE1</accession>
<organism>
    <name type="scientific">Staphylococcus aureus (strain JH9)</name>
    <dbReference type="NCBI Taxonomy" id="359786"/>
    <lineage>
        <taxon>Bacteria</taxon>
        <taxon>Bacillati</taxon>
        <taxon>Bacillota</taxon>
        <taxon>Bacilli</taxon>
        <taxon>Bacillales</taxon>
        <taxon>Staphylococcaceae</taxon>
        <taxon>Staphylococcus</taxon>
    </lineage>
</organism>
<evidence type="ECO:0000255" key="1">
    <source>
        <dbReference type="HAMAP-Rule" id="MF_01442"/>
    </source>
</evidence>
<name>CHDC_STAA9</name>
<reference key="1">
    <citation type="submission" date="2007-05" db="EMBL/GenBank/DDBJ databases">
        <title>Complete sequence of chromosome of Staphylococcus aureus subsp. aureus JH9.</title>
        <authorList>
            <consortium name="US DOE Joint Genome Institute"/>
            <person name="Copeland A."/>
            <person name="Lucas S."/>
            <person name="Lapidus A."/>
            <person name="Barry K."/>
            <person name="Detter J.C."/>
            <person name="Glavina del Rio T."/>
            <person name="Hammon N."/>
            <person name="Israni S."/>
            <person name="Pitluck S."/>
            <person name="Chain P."/>
            <person name="Malfatti S."/>
            <person name="Shin M."/>
            <person name="Vergez L."/>
            <person name="Schmutz J."/>
            <person name="Larimer F."/>
            <person name="Land M."/>
            <person name="Hauser L."/>
            <person name="Kyrpides N."/>
            <person name="Kim E."/>
            <person name="Tomasz A."/>
            <person name="Richardson P."/>
        </authorList>
    </citation>
    <scope>NUCLEOTIDE SEQUENCE [LARGE SCALE GENOMIC DNA]</scope>
    <source>
        <strain>JH9</strain>
    </source>
</reference>
<protein>
    <recommendedName>
        <fullName evidence="1">Coproheme decarboxylase</fullName>
        <ecNumber evidence="1">1.3.98.5</ecNumber>
    </recommendedName>
    <alternativeName>
        <fullName evidence="1">Coproheme III oxidative decarboxylase</fullName>
    </alternativeName>
    <alternativeName>
        <fullName evidence="1">Hydrogen peroxide-dependent heme synthase</fullName>
    </alternativeName>
</protein>